<organism>
    <name type="scientific">Pyrococcus furiosus (strain ATCC 43587 / DSM 3638 / JCM 8422 / Vc1)</name>
    <dbReference type="NCBI Taxonomy" id="186497"/>
    <lineage>
        <taxon>Archaea</taxon>
        <taxon>Methanobacteriati</taxon>
        <taxon>Methanobacteriota</taxon>
        <taxon>Thermococci</taxon>
        <taxon>Thermococcales</taxon>
        <taxon>Thermococcaceae</taxon>
        <taxon>Pyrococcus</taxon>
    </lineage>
</organism>
<gene>
    <name evidence="1" type="primary">truA</name>
    <name type="ordered locus">PF0918</name>
</gene>
<dbReference type="EC" id="5.4.99.12" evidence="1"/>
<dbReference type="EMBL" id="AE009950">
    <property type="protein sequence ID" value="AAL81042.1"/>
    <property type="molecule type" value="Genomic_DNA"/>
</dbReference>
<dbReference type="RefSeq" id="WP_011012054.1">
    <property type="nucleotide sequence ID" value="NZ_CP023154.1"/>
</dbReference>
<dbReference type="PDB" id="8Q70">
    <property type="method" value="X-ray"/>
    <property type="resolution" value="1.85 A"/>
    <property type="chains" value="A=2-266"/>
</dbReference>
<dbReference type="PDBsum" id="8Q70"/>
<dbReference type="SMR" id="Q8U2C1"/>
<dbReference type="STRING" id="186497.PF0918"/>
<dbReference type="PaxDb" id="186497-PF0918"/>
<dbReference type="GeneID" id="41712726"/>
<dbReference type="KEGG" id="pfu:PF0918"/>
<dbReference type="PATRIC" id="fig|186497.12.peg.974"/>
<dbReference type="eggNOG" id="arCOG04449">
    <property type="taxonomic scope" value="Archaea"/>
</dbReference>
<dbReference type="HOGENOM" id="CLU_014673_4_2_2"/>
<dbReference type="OrthoDB" id="25720at2157"/>
<dbReference type="PhylomeDB" id="Q8U2C1"/>
<dbReference type="Proteomes" id="UP000001013">
    <property type="component" value="Chromosome"/>
</dbReference>
<dbReference type="GO" id="GO:0003723">
    <property type="term" value="F:RNA binding"/>
    <property type="evidence" value="ECO:0007669"/>
    <property type="project" value="InterPro"/>
</dbReference>
<dbReference type="GO" id="GO:0160147">
    <property type="term" value="F:tRNA pseudouridine(38-40) synthase activity"/>
    <property type="evidence" value="ECO:0007669"/>
    <property type="project" value="UniProtKB-EC"/>
</dbReference>
<dbReference type="GO" id="GO:0031119">
    <property type="term" value="P:tRNA pseudouridine synthesis"/>
    <property type="evidence" value="ECO:0007669"/>
    <property type="project" value="UniProtKB-UniRule"/>
</dbReference>
<dbReference type="CDD" id="cd02866">
    <property type="entry name" value="PseudoU_synth_TruA_Archea"/>
    <property type="match status" value="1"/>
</dbReference>
<dbReference type="Gene3D" id="3.30.70.660">
    <property type="entry name" value="Pseudouridine synthase I, catalytic domain, C-terminal subdomain"/>
    <property type="match status" value="1"/>
</dbReference>
<dbReference type="Gene3D" id="3.30.70.580">
    <property type="entry name" value="Pseudouridine synthase I, catalytic domain, N-terminal subdomain"/>
    <property type="match status" value="1"/>
</dbReference>
<dbReference type="HAMAP" id="MF_00171">
    <property type="entry name" value="TruA"/>
    <property type="match status" value="1"/>
</dbReference>
<dbReference type="InterPro" id="IPR020103">
    <property type="entry name" value="PsdUridine_synth_cat_dom_sf"/>
</dbReference>
<dbReference type="InterPro" id="IPR001406">
    <property type="entry name" value="PsdUridine_synth_TruA"/>
</dbReference>
<dbReference type="InterPro" id="IPR020097">
    <property type="entry name" value="PsdUridine_synth_TruA_a/b_dom"/>
</dbReference>
<dbReference type="InterPro" id="IPR020095">
    <property type="entry name" value="PsdUridine_synth_TruA_C"/>
</dbReference>
<dbReference type="InterPro" id="IPR020094">
    <property type="entry name" value="TruA/RsuA/RluB/E/F_N"/>
</dbReference>
<dbReference type="NCBIfam" id="TIGR00071">
    <property type="entry name" value="hisT_truA"/>
    <property type="match status" value="1"/>
</dbReference>
<dbReference type="PANTHER" id="PTHR11142">
    <property type="entry name" value="PSEUDOURIDYLATE SYNTHASE"/>
    <property type="match status" value="1"/>
</dbReference>
<dbReference type="PANTHER" id="PTHR11142:SF0">
    <property type="entry name" value="TRNA PSEUDOURIDINE SYNTHASE-LIKE 1"/>
    <property type="match status" value="1"/>
</dbReference>
<dbReference type="Pfam" id="PF01416">
    <property type="entry name" value="PseudoU_synth_1"/>
    <property type="match status" value="1"/>
</dbReference>
<dbReference type="PIRSF" id="PIRSF001430">
    <property type="entry name" value="tRNA_psdUrid_synth"/>
    <property type="match status" value="1"/>
</dbReference>
<dbReference type="SUPFAM" id="SSF55120">
    <property type="entry name" value="Pseudouridine synthase"/>
    <property type="match status" value="1"/>
</dbReference>
<feature type="chain" id="PRO_0000057512" description="tRNA pseudouridine synthase A">
    <location>
        <begin position="1"/>
        <end position="266"/>
    </location>
</feature>
<feature type="active site" description="Nucleophile" evidence="1">
    <location>
        <position position="51"/>
    </location>
</feature>
<feature type="binding site" evidence="1">
    <location>
        <position position="106"/>
    </location>
    <ligand>
        <name>substrate</name>
    </ligand>
</feature>
<feature type="strand" evidence="2">
    <location>
        <begin position="2"/>
        <end position="9"/>
    </location>
</feature>
<feature type="helix" evidence="2">
    <location>
        <begin position="11"/>
        <end position="13"/>
    </location>
</feature>
<feature type="helix" evidence="2">
    <location>
        <begin position="26"/>
        <end position="37"/>
    </location>
</feature>
<feature type="strand" evidence="2">
    <location>
        <begin position="42"/>
        <end position="47"/>
    </location>
</feature>
<feature type="strand" evidence="2">
    <location>
        <begin position="55"/>
        <end position="64"/>
    </location>
</feature>
<feature type="helix" evidence="2">
    <location>
        <begin position="68"/>
        <end position="71"/>
    </location>
</feature>
<feature type="helix" evidence="2">
    <location>
        <begin position="74"/>
        <end position="77"/>
    </location>
</feature>
<feature type="strand" evidence="2">
    <location>
        <begin position="81"/>
        <end position="91"/>
    </location>
</feature>
<feature type="turn" evidence="2">
    <location>
        <begin position="97"/>
        <end position="99"/>
    </location>
</feature>
<feature type="strand" evidence="2">
    <location>
        <begin position="100"/>
        <end position="111"/>
    </location>
</feature>
<feature type="helix" evidence="2">
    <location>
        <begin position="117"/>
        <end position="124"/>
    </location>
</feature>
<feature type="helix" evidence="2">
    <location>
        <begin position="125"/>
        <end position="127"/>
    </location>
</feature>
<feature type="strand" evidence="2">
    <location>
        <begin position="128"/>
        <end position="132"/>
    </location>
</feature>
<feature type="helix" evidence="2">
    <location>
        <begin position="134"/>
        <end position="136"/>
    </location>
</feature>
<feature type="strand" evidence="2">
    <location>
        <begin position="140"/>
        <end position="142"/>
    </location>
</feature>
<feature type="strand" evidence="2">
    <location>
        <begin position="145"/>
        <end position="156"/>
    </location>
</feature>
<feature type="strand" evidence="2">
    <location>
        <begin position="159"/>
        <end position="167"/>
    </location>
</feature>
<feature type="helix" evidence="2">
    <location>
        <begin position="173"/>
        <end position="185"/>
    </location>
</feature>
<feature type="helix" evidence="2">
    <location>
        <begin position="191"/>
        <end position="198"/>
    </location>
</feature>
<feature type="helix" evidence="2">
    <location>
        <begin position="204"/>
        <end position="206"/>
    </location>
</feature>
<feature type="helix" evidence="2">
    <location>
        <begin position="213"/>
        <end position="215"/>
    </location>
</feature>
<feature type="strand" evidence="2">
    <location>
        <begin position="216"/>
        <end position="223"/>
    </location>
</feature>
<feature type="helix" evidence="2">
    <location>
        <begin position="232"/>
        <end position="259"/>
    </location>
</feature>
<sequence>MRVALKIAYDGTKFHGFQRQPNVRTIEGEILRALKDAGIEFENFKSASRTDRGVSARGNVIALSTEDDRIKNPMVLNSRMSDVWIWGIAEVPEDFHPRFWANTKVYRYYLPSLGMNIKKMKECSLLFLGTHDFSAFSRVDGRDTIRSIDRIEIWEKCNVVVVEIEGKSFLWEMVRRIVSALVLCSQGVLAEERIVEMLNGKFEKSRKVPPAPPEGLLLWDIKYENVEFQIDNASLKKFQREIVERFKLHASLSALYEDLILNEQKI</sequence>
<name>TRUA_PYRFU</name>
<comment type="function">
    <text evidence="1">Formation of pseudouridine at positions 38, 39 and 40 in the anticodon stem and loop of transfer RNAs.</text>
</comment>
<comment type="catalytic activity">
    <reaction evidence="1">
        <text>uridine(38/39/40) in tRNA = pseudouridine(38/39/40) in tRNA</text>
        <dbReference type="Rhea" id="RHEA:22376"/>
        <dbReference type="Rhea" id="RHEA-COMP:10085"/>
        <dbReference type="Rhea" id="RHEA-COMP:10087"/>
        <dbReference type="ChEBI" id="CHEBI:65314"/>
        <dbReference type="ChEBI" id="CHEBI:65315"/>
        <dbReference type="EC" id="5.4.99.12"/>
    </reaction>
</comment>
<comment type="similarity">
    <text evidence="1">Belongs to the tRNA pseudouridine synthase TruA family.</text>
</comment>
<keyword id="KW-0002">3D-structure</keyword>
<keyword id="KW-0413">Isomerase</keyword>
<keyword id="KW-1185">Reference proteome</keyword>
<keyword id="KW-0819">tRNA processing</keyword>
<protein>
    <recommendedName>
        <fullName evidence="1">tRNA pseudouridine synthase A</fullName>
        <ecNumber evidence="1">5.4.99.12</ecNumber>
    </recommendedName>
    <alternativeName>
        <fullName evidence="1">tRNA pseudouridine(38-40) synthase</fullName>
    </alternativeName>
    <alternativeName>
        <fullName evidence="1">tRNA pseudouridylate synthase I</fullName>
    </alternativeName>
    <alternativeName>
        <fullName evidence="1">tRNA-uridine isomerase I</fullName>
    </alternativeName>
</protein>
<proteinExistence type="evidence at protein level"/>
<evidence type="ECO:0000255" key="1">
    <source>
        <dbReference type="HAMAP-Rule" id="MF_00171"/>
    </source>
</evidence>
<evidence type="ECO:0007829" key="2">
    <source>
        <dbReference type="PDB" id="8Q70"/>
    </source>
</evidence>
<accession>Q8U2C1</accession>
<reference key="1">
    <citation type="journal article" date="1999" name="Genetics">
        <title>Divergence of the hyperthermophilic archaea Pyrococcus furiosus and P. horikoshii inferred from complete genomic sequences.</title>
        <authorList>
            <person name="Maeder D.L."/>
            <person name="Weiss R.B."/>
            <person name="Dunn D.M."/>
            <person name="Cherry J.L."/>
            <person name="Gonzalez J.M."/>
            <person name="DiRuggiero J."/>
            <person name="Robb F.T."/>
        </authorList>
    </citation>
    <scope>NUCLEOTIDE SEQUENCE [LARGE SCALE GENOMIC DNA]</scope>
    <source>
        <strain>ATCC 43587 / DSM 3638 / JCM 8422 / Vc1</strain>
    </source>
</reference>